<evidence type="ECO:0000255" key="1">
    <source>
        <dbReference type="HAMAP-Rule" id="MF_00607"/>
    </source>
</evidence>
<name>RSMA_PARM1</name>
<keyword id="KW-0963">Cytoplasm</keyword>
<keyword id="KW-0489">Methyltransferase</keyword>
<keyword id="KW-0694">RNA-binding</keyword>
<keyword id="KW-0698">rRNA processing</keyword>
<keyword id="KW-0949">S-adenosyl-L-methionine</keyword>
<keyword id="KW-0808">Transferase</keyword>
<gene>
    <name evidence="1" type="primary">rsmA</name>
    <name evidence="1" type="synonym">ksgA</name>
    <name type="ordered locus">amb3718</name>
</gene>
<dbReference type="EC" id="2.1.1.182" evidence="1"/>
<dbReference type="EMBL" id="AP007255">
    <property type="protein sequence ID" value="BAE52522.1"/>
    <property type="molecule type" value="Genomic_DNA"/>
</dbReference>
<dbReference type="RefSeq" id="WP_011386074.1">
    <property type="nucleotide sequence ID" value="NC_007626.1"/>
</dbReference>
<dbReference type="SMR" id="Q2W0V3"/>
<dbReference type="STRING" id="342108.amb3718"/>
<dbReference type="KEGG" id="mag:amb3718"/>
<dbReference type="HOGENOM" id="CLU_041220_0_1_5"/>
<dbReference type="OrthoDB" id="9814755at2"/>
<dbReference type="Proteomes" id="UP000007058">
    <property type="component" value="Chromosome"/>
</dbReference>
<dbReference type="GO" id="GO:0005829">
    <property type="term" value="C:cytosol"/>
    <property type="evidence" value="ECO:0007669"/>
    <property type="project" value="TreeGrafter"/>
</dbReference>
<dbReference type="GO" id="GO:0052908">
    <property type="term" value="F:16S rRNA (adenine(1518)-N(6)/adenine(1519)-N(6))-dimethyltransferase activity"/>
    <property type="evidence" value="ECO:0007669"/>
    <property type="project" value="UniProtKB-EC"/>
</dbReference>
<dbReference type="GO" id="GO:0003723">
    <property type="term" value="F:RNA binding"/>
    <property type="evidence" value="ECO:0007669"/>
    <property type="project" value="UniProtKB-KW"/>
</dbReference>
<dbReference type="CDD" id="cd02440">
    <property type="entry name" value="AdoMet_MTases"/>
    <property type="match status" value="1"/>
</dbReference>
<dbReference type="FunFam" id="1.10.8.100:FF:000001">
    <property type="entry name" value="Ribosomal RNA small subunit methyltransferase A"/>
    <property type="match status" value="1"/>
</dbReference>
<dbReference type="Gene3D" id="1.10.8.100">
    <property type="entry name" value="Ribosomal RNA adenine dimethylase-like, domain 2"/>
    <property type="match status" value="1"/>
</dbReference>
<dbReference type="Gene3D" id="3.40.50.150">
    <property type="entry name" value="Vaccinia Virus protein VP39"/>
    <property type="match status" value="1"/>
</dbReference>
<dbReference type="HAMAP" id="MF_00607">
    <property type="entry name" value="16SrRNA_methyltr_A"/>
    <property type="match status" value="1"/>
</dbReference>
<dbReference type="InterPro" id="IPR001737">
    <property type="entry name" value="KsgA/Erm"/>
</dbReference>
<dbReference type="InterPro" id="IPR023165">
    <property type="entry name" value="rRNA_Ade_diMease-like_C"/>
</dbReference>
<dbReference type="InterPro" id="IPR020596">
    <property type="entry name" value="rRNA_Ade_Mease_Trfase_CS"/>
</dbReference>
<dbReference type="InterPro" id="IPR020598">
    <property type="entry name" value="rRNA_Ade_methylase_Trfase_N"/>
</dbReference>
<dbReference type="InterPro" id="IPR011530">
    <property type="entry name" value="rRNA_adenine_dimethylase"/>
</dbReference>
<dbReference type="InterPro" id="IPR029063">
    <property type="entry name" value="SAM-dependent_MTases_sf"/>
</dbReference>
<dbReference type="NCBIfam" id="TIGR00755">
    <property type="entry name" value="ksgA"/>
    <property type="match status" value="1"/>
</dbReference>
<dbReference type="PANTHER" id="PTHR11727">
    <property type="entry name" value="DIMETHYLADENOSINE TRANSFERASE"/>
    <property type="match status" value="1"/>
</dbReference>
<dbReference type="PANTHER" id="PTHR11727:SF7">
    <property type="entry name" value="DIMETHYLADENOSINE TRANSFERASE-RELATED"/>
    <property type="match status" value="1"/>
</dbReference>
<dbReference type="Pfam" id="PF00398">
    <property type="entry name" value="RrnaAD"/>
    <property type="match status" value="1"/>
</dbReference>
<dbReference type="SMART" id="SM00650">
    <property type="entry name" value="rADc"/>
    <property type="match status" value="1"/>
</dbReference>
<dbReference type="SUPFAM" id="SSF53335">
    <property type="entry name" value="S-adenosyl-L-methionine-dependent methyltransferases"/>
    <property type="match status" value="1"/>
</dbReference>
<dbReference type="PROSITE" id="PS01131">
    <property type="entry name" value="RRNA_A_DIMETH"/>
    <property type="match status" value="1"/>
</dbReference>
<dbReference type="PROSITE" id="PS51689">
    <property type="entry name" value="SAM_RNA_A_N6_MT"/>
    <property type="match status" value="1"/>
</dbReference>
<comment type="function">
    <text evidence="1">Specifically dimethylates two adjacent adenosines (A1518 and A1519) in the loop of a conserved hairpin near the 3'-end of 16S rRNA in the 30S particle. May play a critical role in biogenesis of 30S subunits.</text>
</comment>
<comment type="catalytic activity">
    <reaction evidence="1">
        <text>adenosine(1518)/adenosine(1519) in 16S rRNA + 4 S-adenosyl-L-methionine = N(6)-dimethyladenosine(1518)/N(6)-dimethyladenosine(1519) in 16S rRNA + 4 S-adenosyl-L-homocysteine + 4 H(+)</text>
        <dbReference type="Rhea" id="RHEA:19609"/>
        <dbReference type="Rhea" id="RHEA-COMP:10232"/>
        <dbReference type="Rhea" id="RHEA-COMP:10233"/>
        <dbReference type="ChEBI" id="CHEBI:15378"/>
        <dbReference type="ChEBI" id="CHEBI:57856"/>
        <dbReference type="ChEBI" id="CHEBI:59789"/>
        <dbReference type="ChEBI" id="CHEBI:74411"/>
        <dbReference type="ChEBI" id="CHEBI:74493"/>
        <dbReference type="EC" id="2.1.1.182"/>
    </reaction>
</comment>
<comment type="subcellular location">
    <subcellularLocation>
        <location evidence="1">Cytoplasm</location>
    </subcellularLocation>
</comment>
<comment type="similarity">
    <text evidence="1">Belongs to the class I-like SAM-binding methyltransferase superfamily. rRNA adenine N(6)-methyltransferase family. RsmA subfamily.</text>
</comment>
<sequence length="281" mass="30662">MADLPPLREVIARHGLDARKSLGQHFLFDLNLTGRIARAAGDLTVGSVIEIGPGPGGLTRALLDAGARQVIAIERDDRAIAIQNEIAEAYPGRLEIMAADAMTVDAAELGEVPRRIVANLPYNISTALLLGWLRRADAFERLVLMFQKEVVDRLAAPPRSEHYGRLSVITQWRCEVRPLFNVDRRAFTPPPAVTSTVVDLIPRAEPLAPARFETLERVTAAAFGQRRKMLRSSLKSLGGAEDLLERTGILPTARAEEIPVEGFCALARALDARTLDGHQSA</sequence>
<organism>
    <name type="scientific">Paramagnetospirillum magneticum (strain ATCC 700264 / AMB-1)</name>
    <name type="common">Magnetospirillum magneticum</name>
    <dbReference type="NCBI Taxonomy" id="342108"/>
    <lineage>
        <taxon>Bacteria</taxon>
        <taxon>Pseudomonadati</taxon>
        <taxon>Pseudomonadota</taxon>
        <taxon>Alphaproteobacteria</taxon>
        <taxon>Rhodospirillales</taxon>
        <taxon>Magnetospirillaceae</taxon>
        <taxon>Paramagnetospirillum</taxon>
    </lineage>
</organism>
<reference key="1">
    <citation type="journal article" date="2005" name="DNA Res.">
        <title>Complete genome sequence of the facultative anaerobic magnetotactic bacterium Magnetospirillum sp. strain AMB-1.</title>
        <authorList>
            <person name="Matsunaga T."/>
            <person name="Okamura Y."/>
            <person name="Fukuda Y."/>
            <person name="Wahyudi A.T."/>
            <person name="Murase Y."/>
            <person name="Takeyama H."/>
        </authorList>
    </citation>
    <scope>NUCLEOTIDE SEQUENCE [LARGE SCALE GENOMIC DNA]</scope>
    <source>
        <strain>ATCC 700264 / AMB-1</strain>
    </source>
</reference>
<feature type="chain" id="PRO_0000257301" description="Ribosomal RNA small subunit methyltransferase A">
    <location>
        <begin position="1"/>
        <end position="281"/>
    </location>
</feature>
<feature type="binding site" evidence="1">
    <location>
        <position position="25"/>
    </location>
    <ligand>
        <name>S-adenosyl-L-methionine</name>
        <dbReference type="ChEBI" id="CHEBI:59789"/>
    </ligand>
</feature>
<feature type="binding site" evidence="1">
    <location>
        <position position="27"/>
    </location>
    <ligand>
        <name>S-adenosyl-L-methionine</name>
        <dbReference type="ChEBI" id="CHEBI:59789"/>
    </ligand>
</feature>
<feature type="binding site" evidence="1">
    <location>
        <position position="52"/>
    </location>
    <ligand>
        <name>S-adenosyl-L-methionine</name>
        <dbReference type="ChEBI" id="CHEBI:59789"/>
    </ligand>
</feature>
<feature type="binding site" evidence="1">
    <location>
        <position position="74"/>
    </location>
    <ligand>
        <name>S-adenosyl-L-methionine</name>
        <dbReference type="ChEBI" id="CHEBI:59789"/>
    </ligand>
</feature>
<feature type="binding site" evidence="1">
    <location>
        <position position="100"/>
    </location>
    <ligand>
        <name>S-adenosyl-L-methionine</name>
        <dbReference type="ChEBI" id="CHEBI:59789"/>
    </ligand>
</feature>
<feature type="binding site" evidence="1">
    <location>
        <position position="119"/>
    </location>
    <ligand>
        <name>S-adenosyl-L-methionine</name>
        <dbReference type="ChEBI" id="CHEBI:59789"/>
    </ligand>
</feature>
<protein>
    <recommendedName>
        <fullName evidence="1">Ribosomal RNA small subunit methyltransferase A</fullName>
        <ecNumber evidence="1">2.1.1.182</ecNumber>
    </recommendedName>
    <alternativeName>
        <fullName evidence="1">16S rRNA (adenine(1518)-N(6)/adenine(1519)-N(6))-dimethyltransferase</fullName>
    </alternativeName>
    <alternativeName>
        <fullName evidence="1">16S rRNA dimethyladenosine transferase</fullName>
    </alternativeName>
    <alternativeName>
        <fullName evidence="1">16S rRNA dimethylase</fullName>
    </alternativeName>
    <alternativeName>
        <fullName evidence="1">S-adenosylmethionine-6-N', N'-adenosyl(rRNA) dimethyltransferase</fullName>
    </alternativeName>
</protein>
<proteinExistence type="inferred from homology"/>
<accession>Q2W0V3</accession>